<evidence type="ECO:0000255" key="1">
    <source>
        <dbReference type="HAMAP-Rule" id="MF_00440"/>
    </source>
</evidence>
<reference key="1">
    <citation type="journal article" date="2009" name="Environ. Microbiol.">
        <title>The genome of Polaromonas naphthalenivorans strain CJ2, isolated from coal tar-contaminated sediment, reveals physiological and metabolic versatility and evolution through extensive horizontal gene transfer.</title>
        <authorList>
            <person name="Yagi J.M."/>
            <person name="Sims D."/>
            <person name="Brettin T."/>
            <person name="Bruce D."/>
            <person name="Madsen E.L."/>
        </authorList>
    </citation>
    <scope>NUCLEOTIDE SEQUENCE [LARGE SCALE GENOMIC DNA]</scope>
    <source>
        <strain>CJ2</strain>
    </source>
</reference>
<comment type="function">
    <text evidence="1">Negatively regulates transcription of bacterial ribonucleotide reductase nrd genes and operons by binding to NrdR-boxes.</text>
</comment>
<comment type="cofactor">
    <cofactor evidence="1">
        <name>Zn(2+)</name>
        <dbReference type="ChEBI" id="CHEBI:29105"/>
    </cofactor>
    <text evidence="1">Binds 1 zinc ion.</text>
</comment>
<comment type="similarity">
    <text evidence="1">Belongs to the NrdR family.</text>
</comment>
<keyword id="KW-0067">ATP-binding</keyword>
<keyword id="KW-0238">DNA-binding</keyword>
<keyword id="KW-0479">Metal-binding</keyword>
<keyword id="KW-0547">Nucleotide-binding</keyword>
<keyword id="KW-1185">Reference proteome</keyword>
<keyword id="KW-0678">Repressor</keyword>
<keyword id="KW-0804">Transcription</keyword>
<keyword id="KW-0805">Transcription regulation</keyword>
<keyword id="KW-0862">Zinc</keyword>
<keyword id="KW-0863">Zinc-finger</keyword>
<dbReference type="EMBL" id="CP000529">
    <property type="protein sequence ID" value="ABM38207.1"/>
    <property type="molecule type" value="Genomic_DNA"/>
</dbReference>
<dbReference type="RefSeq" id="WP_011802281.1">
    <property type="nucleotide sequence ID" value="NC_008781.1"/>
</dbReference>
<dbReference type="SMR" id="A1VRC9"/>
<dbReference type="STRING" id="365044.Pnap_2908"/>
<dbReference type="KEGG" id="pna:Pnap_2908"/>
<dbReference type="eggNOG" id="COG1327">
    <property type="taxonomic scope" value="Bacteria"/>
</dbReference>
<dbReference type="HOGENOM" id="CLU_108412_0_0_4"/>
<dbReference type="OrthoDB" id="9807461at2"/>
<dbReference type="Proteomes" id="UP000000644">
    <property type="component" value="Chromosome"/>
</dbReference>
<dbReference type="GO" id="GO:0005524">
    <property type="term" value="F:ATP binding"/>
    <property type="evidence" value="ECO:0007669"/>
    <property type="project" value="UniProtKB-KW"/>
</dbReference>
<dbReference type="GO" id="GO:0003677">
    <property type="term" value="F:DNA binding"/>
    <property type="evidence" value="ECO:0007669"/>
    <property type="project" value="UniProtKB-KW"/>
</dbReference>
<dbReference type="GO" id="GO:0008270">
    <property type="term" value="F:zinc ion binding"/>
    <property type="evidence" value="ECO:0007669"/>
    <property type="project" value="UniProtKB-UniRule"/>
</dbReference>
<dbReference type="GO" id="GO:0045892">
    <property type="term" value="P:negative regulation of DNA-templated transcription"/>
    <property type="evidence" value="ECO:0007669"/>
    <property type="project" value="UniProtKB-UniRule"/>
</dbReference>
<dbReference type="HAMAP" id="MF_00440">
    <property type="entry name" value="NrdR"/>
    <property type="match status" value="1"/>
</dbReference>
<dbReference type="InterPro" id="IPR005144">
    <property type="entry name" value="ATP-cone_dom"/>
</dbReference>
<dbReference type="InterPro" id="IPR055173">
    <property type="entry name" value="NrdR-like_N"/>
</dbReference>
<dbReference type="InterPro" id="IPR003796">
    <property type="entry name" value="RNR_NrdR-like"/>
</dbReference>
<dbReference type="NCBIfam" id="TIGR00244">
    <property type="entry name" value="transcriptional regulator NrdR"/>
    <property type="match status" value="1"/>
</dbReference>
<dbReference type="PANTHER" id="PTHR30455">
    <property type="entry name" value="TRANSCRIPTIONAL REPRESSOR NRDR"/>
    <property type="match status" value="1"/>
</dbReference>
<dbReference type="PANTHER" id="PTHR30455:SF2">
    <property type="entry name" value="TRANSCRIPTIONAL REPRESSOR NRDR"/>
    <property type="match status" value="1"/>
</dbReference>
<dbReference type="Pfam" id="PF03477">
    <property type="entry name" value="ATP-cone"/>
    <property type="match status" value="1"/>
</dbReference>
<dbReference type="Pfam" id="PF22811">
    <property type="entry name" value="Zn_ribbon_NrdR"/>
    <property type="match status" value="1"/>
</dbReference>
<dbReference type="PROSITE" id="PS51161">
    <property type="entry name" value="ATP_CONE"/>
    <property type="match status" value="1"/>
</dbReference>
<protein>
    <recommendedName>
        <fullName evidence="1">Transcriptional repressor NrdR</fullName>
    </recommendedName>
</protein>
<gene>
    <name evidence="1" type="primary">nrdR</name>
    <name type="ordered locus">Pnap_2908</name>
</gene>
<sequence>MKCPFCGHLETQVVETRISEDAEFIRRRRQCGACEKRFTTYERPDVSFPSIVKKDGRRTDYQRGKILGSMRLALRKRPVSTAQIDAAVEQIEEKLLSLGLREVASSRLGELVMLELKKLDKIAYIRFASVYRSFEDIDEFKTLVDEVGR</sequence>
<feature type="chain" id="PRO_1000080793" description="Transcriptional repressor NrdR">
    <location>
        <begin position="1"/>
        <end position="149"/>
    </location>
</feature>
<feature type="domain" description="ATP-cone" evidence="1">
    <location>
        <begin position="49"/>
        <end position="139"/>
    </location>
</feature>
<feature type="zinc finger region" evidence="1">
    <location>
        <begin position="3"/>
        <end position="34"/>
    </location>
</feature>
<accession>A1VRC9</accession>
<proteinExistence type="inferred from homology"/>
<name>NRDR_POLNA</name>
<organism>
    <name type="scientific">Polaromonas naphthalenivorans (strain CJ2)</name>
    <dbReference type="NCBI Taxonomy" id="365044"/>
    <lineage>
        <taxon>Bacteria</taxon>
        <taxon>Pseudomonadati</taxon>
        <taxon>Pseudomonadota</taxon>
        <taxon>Betaproteobacteria</taxon>
        <taxon>Burkholderiales</taxon>
        <taxon>Comamonadaceae</taxon>
        <taxon>Polaromonas</taxon>
    </lineage>
</organism>